<keyword id="KW-0002">3D-structure</keyword>
<keyword id="KW-0238">DNA-binding</keyword>
<keyword id="KW-1185">Reference proteome</keyword>
<keyword id="KW-0946">Virion</keyword>
<dbReference type="EMBL" id="AJ567472">
    <property type="protein sequence ID" value="CAD98954.1"/>
    <property type="molecule type" value="Genomic_DNA"/>
</dbReference>
<dbReference type="RefSeq" id="YP_003750.1">
    <property type="nucleotide sequence ID" value="NC_005830.1"/>
</dbReference>
<dbReference type="PDB" id="3FBZ">
    <property type="method" value="X-ray"/>
    <property type="resolution" value="2.30 A"/>
    <property type="chains" value="A/B/C/D=2-140"/>
</dbReference>
<dbReference type="PDB" id="5W7G">
    <property type="method" value="EM"/>
    <property type="resolution" value="4.50 A"/>
    <property type="chains" value="A/C/E/G/I/K/M/O/Q/S/U/W/Y/a/c/e/g/i/k/m/o=1-140"/>
</dbReference>
<dbReference type="PDBsum" id="3FBZ"/>
<dbReference type="PDBsum" id="5W7G"/>
<dbReference type="EMDB" id="EMD-8780"/>
<dbReference type="SMR" id="Q70LC6"/>
<dbReference type="KEGG" id="vg:2769161"/>
<dbReference type="EvolutionaryTrace" id="Q70LC6"/>
<dbReference type="Proteomes" id="UP000000514">
    <property type="component" value="Genome"/>
</dbReference>
<dbReference type="GO" id="GO:0019029">
    <property type="term" value="C:helical viral capsid"/>
    <property type="evidence" value="ECO:0000314"/>
    <property type="project" value="UniProtKB"/>
</dbReference>
<dbReference type="GO" id="GO:0003677">
    <property type="term" value="F:DNA binding"/>
    <property type="evidence" value="ECO:0000314"/>
    <property type="project" value="UniProtKB"/>
</dbReference>
<dbReference type="Gene3D" id="1.20.58.800">
    <property type="match status" value="1"/>
</dbReference>
<dbReference type="Pfam" id="PF21660">
    <property type="entry name" value="MCP_C"/>
    <property type="match status" value="1"/>
</dbReference>
<proteinExistence type="evidence at protein level"/>
<organismHost>
    <name type="scientific">Acidianus hospitalis</name>
    <dbReference type="NCBI Taxonomy" id="563177"/>
</organismHost>
<organismHost>
    <name type="scientific">Acidianus infernus</name>
    <dbReference type="NCBI Taxonomy" id="12915"/>
</organismHost>
<organism>
    <name type="scientific">Acidianus filamentous virus 1 (isolate United States/Yellowstone)</name>
    <name type="common">AFV-1</name>
    <dbReference type="NCBI Taxonomy" id="654909"/>
    <lineage>
        <taxon>Viruses</taxon>
        <taxon>Adnaviria</taxon>
        <taxon>Zilligvirae</taxon>
        <taxon>Taleaviricota</taxon>
        <taxon>Tokiviricetes</taxon>
        <taxon>Ligamenvirales</taxon>
        <taxon>Ungulaviridae</taxon>
        <taxon>Captovirus</taxon>
        <taxon>Acidianus filamentous virus 1</taxon>
    </lineage>
</organism>
<feature type="chain" id="PRO_0000384558" description="Major capsid protein 1">
    <location>
        <begin position="1"/>
        <end position="140"/>
    </location>
</feature>
<feature type="helix" evidence="8">
    <location>
        <begin position="17"/>
        <end position="20"/>
    </location>
</feature>
<feature type="helix" evidence="8">
    <location>
        <begin position="21"/>
        <end position="23"/>
    </location>
</feature>
<feature type="helix" evidence="8">
    <location>
        <begin position="32"/>
        <end position="66"/>
    </location>
</feature>
<feature type="helix" evidence="8">
    <location>
        <begin position="71"/>
        <end position="73"/>
    </location>
</feature>
<feature type="helix" evidence="8">
    <location>
        <begin position="74"/>
        <end position="94"/>
    </location>
</feature>
<feature type="helix" evidence="8">
    <location>
        <begin position="98"/>
        <end position="117"/>
    </location>
</feature>
<feature type="helix" evidence="8">
    <location>
        <begin position="121"/>
        <end position="136"/>
    </location>
</feature>
<name>CAPS1_AFV1Y</name>
<protein>
    <recommendedName>
        <fullName evidence="4">Major capsid protein 1</fullName>
    </recommendedName>
    <alternativeName>
        <fullName>MCP1</fullName>
    </alternativeName>
</protein>
<reference key="1">
    <citation type="journal article" date="2003" name="Virology">
        <title>AFV1, a novel virus infecting hyperthermophilic archaea of the genus acidianus.</title>
        <authorList>
            <person name="Bettstetter M."/>
            <person name="Peng X."/>
            <person name="Garrett R.A."/>
            <person name="Prangishvili D."/>
        </authorList>
    </citation>
    <scope>NUCLEOTIDE SEQUENCE [GENOMIC DNA]</scope>
</reference>
<reference key="2">
    <citation type="journal article" date="2020" name="Proc. Natl. Acad. Sci. U.S.A.">
        <title>Structures of filamentous viruses infecting hyperthermophilic archaea explain DNA stabilization in extreme environments.</title>
        <authorList>
            <person name="Wang F."/>
            <person name="Baquero D.P."/>
            <person name="Beltran L.C."/>
            <person name="Su Z."/>
            <person name="Osinski T."/>
            <person name="Zheng W."/>
            <person name="Prangishvili D."/>
            <person name="Krupovic M."/>
            <person name="Egelman E.H."/>
        </authorList>
    </citation>
    <scope>SUBUNIT</scope>
    <scope>FUNCTION</scope>
</reference>
<reference evidence="6" key="3">
    <citation type="journal article" date="2009" name="Proc. Natl. Acad. Sci. U.S.A.">
        <title>Acidianus filamentous virus 1 coat proteins display a helical fold spanning the filamentous archaeal viruses lineage.</title>
        <authorList>
            <person name="Goulet A."/>
            <person name="Blangy S."/>
            <person name="Redder P."/>
            <person name="Prangishvili D."/>
            <person name="Felisberto-Rodrigues C."/>
            <person name="Forterre P."/>
            <person name="Campanacci V."/>
            <person name="Cambillau C."/>
        </authorList>
    </citation>
    <scope>X-RAY CRYSTALLOGRAPHY (2.30 ANGSTROMS) OF 2-140</scope>
    <scope>SUBCELLULAR LOCATION</scope>
    <scope>FUNCTION</scope>
    <scope>SUBUNIT</scope>
</reference>
<reference evidence="7" key="4">
    <citation type="journal article" date="2017" name="Elife">
        <title>Model for a novel membrane envelope in a filamentous hyperthermophilic virus.</title>
        <authorList>
            <person name="Kasson P."/>
            <person name="DiMaio F."/>
            <person name="Yu X."/>
            <person name="Lucas-Staat S."/>
            <person name="Krupovic M."/>
            <person name="Schouten S."/>
            <person name="Prangishvili D."/>
            <person name="Egelman E.H."/>
        </authorList>
    </citation>
    <scope>STRUCTURE BY ELECTRON MICROSCOPY (4.50 ANGSTROMS)</scope>
</reference>
<accession>Q70LC6</accession>
<gene>
    <name type="ORF">ORF140</name>
</gene>
<sequence length="140" mass="15815">MAKLNRKLRQDSTDRYKTKLYLWRNLGGLIPEDMAISVTESITADWKQYNDMMSKVRNETLDILKTNKVATEDYIGYIAFAEELAHQVWKNKNSSPDPNTANEASKTDLESKYSDVYGLDVTVLDAIYNAVIPIIMGGGS</sequence>
<comment type="function">
    <text evidence="2 5">Self-assembles to form a helical, filamentous nucleocapsid mesuring 900 nm in length and 24 nm in width (Probable) (PubMed:19934032). Together with capsid protein 2, wraps arounds the DNA and maintains it in an A-form (Probable). Capsid proteins probably maintain the DNA in A-form by non-specific desolvation and specific coordination of the DNA phosphate groups by positively charged residues (Probable). This certainly protects the viral DNA under conditions such as the extreme desiccation of its host (Probable).</text>
</comment>
<comment type="subunit">
    <text evidence="2 3">Heterodimer composed of major capsid protein 1 and major capsid protein 2.</text>
</comment>
<comment type="subcellular location">
    <subcellularLocation>
        <location evidence="2">Virion</location>
    </subcellularLocation>
</comment>
<comment type="domain">
    <text evidence="1">The N-terminus projects into a DNA groove.</text>
</comment>
<evidence type="ECO:0000250" key="1">
    <source>
        <dbReference type="UniProtKB" id="Q914J4"/>
    </source>
</evidence>
<evidence type="ECO:0000269" key="2">
    <source>
    </source>
</evidence>
<evidence type="ECO:0000269" key="3">
    <source>
    </source>
</evidence>
<evidence type="ECO:0000303" key="4">
    <source>
    </source>
</evidence>
<evidence type="ECO:0000305" key="5">
    <source>
    </source>
</evidence>
<evidence type="ECO:0007744" key="6">
    <source>
        <dbReference type="PDB" id="3FBZ"/>
    </source>
</evidence>
<evidence type="ECO:0007744" key="7">
    <source>
        <dbReference type="PDB" id="5W7G"/>
    </source>
</evidence>
<evidence type="ECO:0007829" key="8">
    <source>
        <dbReference type="PDB" id="3FBZ"/>
    </source>
</evidence>